<comment type="function">
    <text evidence="1">DNA-dependent RNA polymerase catalyzes the transcription of DNA into RNA using the four ribonucleoside triphosphates as substrates.</text>
</comment>
<comment type="catalytic activity">
    <reaction evidence="1">
        <text>RNA(n) + a ribonucleoside 5'-triphosphate = RNA(n+1) + diphosphate</text>
        <dbReference type="Rhea" id="RHEA:21248"/>
        <dbReference type="Rhea" id="RHEA-COMP:14527"/>
        <dbReference type="Rhea" id="RHEA-COMP:17342"/>
        <dbReference type="ChEBI" id="CHEBI:33019"/>
        <dbReference type="ChEBI" id="CHEBI:61557"/>
        <dbReference type="ChEBI" id="CHEBI:140395"/>
        <dbReference type="EC" id="2.7.7.6"/>
    </reaction>
</comment>
<comment type="cofactor">
    <cofactor evidence="1">
        <name>Mg(2+)</name>
        <dbReference type="ChEBI" id="CHEBI:18420"/>
    </cofactor>
    <text evidence="1">Binds 1 Mg(2+) ion per subunit.</text>
</comment>
<comment type="cofactor">
    <cofactor evidence="1">
        <name>Zn(2+)</name>
        <dbReference type="ChEBI" id="CHEBI:29105"/>
    </cofactor>
    <text evidence="1">Binds 2 Zn(2+) ions per subunit.</text>
</comment>
<comment type="subunit">
    <text evidence="1">The RNAP catalytic core consists of 2 alpha, 1 beta, 1 beta' and 1 omega subunit. When a sigma factor is associated with the core the holoenzyme is formed, which can initiate transcription.</text>
</comment>
<comment type="similarity">
    <text evidence="1">Belongs to the RNA polymerase beta' chain family.</text>
</comment>
<keyword id="KW-0240">DNA-directed RNA polymerase</keyword>
<keyword id="KW-0460">Magnesium</keyword>
<keyword id="KW-0479">Metal-binding</keyword>
<keyword id="KW-0548">Nucleotidyltransferase</keyword>
<keyword id="KW-1185">Reference proteome</keyword>
<keyword id="KW-0804">Transcription</keyword>
<keyword id="KW-0808">Transferase</keyword>
<keyword id="KW-0862">Zinc</keyword>
<name>RPOC_NOCFA</name>
<protein>
    <recommendedName>
        <fullName evidence="1">DNA-directed RNA polymerase subunit beta'</fullName>
        <shortName evidence="1">RNAP subunit beta'</shortName>
        <ecNumber evidence="1">2.7.7.6</ecNumber>
    </recommendedName>
    <alternativeName>
        <fullName evidence="1">RNA polymerase subunit beta'</fullName>
    </alternativeName>
    <alternativeName>
        <fullName evidence="1">Transcriptase subunit beta'</fullName>
    </alternativeName>
</protein>
<sequence length="1317" mass="146682">MLDVNFFDELRIGLATADDIRQWSYGEVKKPETINYRTLKPEKDGLFCEKIFGPTRDWECYCGKYKRVRFKGIICERCGVEVTRAKVRRERMGHIELAAPVTHIWYFKGVPSRLGYLLDLAPKDLEKIIYFAAYVITSVDEELRHNELSTLEAEMEVEKKAVADQRDADLEARAQKLEADLAELEAEGAKSDVRRKVKDGGEREMRQIRDRAQRELDRLDEIWNTFTKLAPKQLIVDEVLYRELTDRYGEYFTGAMGAESIQKLMENFDIDAEAESLRETIRTGKGQKKLRALKRLKVVAAFQANGNSPMGMVLDAVPVIPPELRPMVQLDGGRFATSDLNDLYRRVINRNNRLKRLIDLGAPEIIVNNEKRMLQESVDALFDNGRRGRPVTGPGNRPLKSLSDLLKGKQGRFRQNLLGKRVDYSGRSVIVVGPQLKLHQCGLPKLMALELFKPFVMKRLVDLNHAQNIKSAKRMVERQRPQVWDVLEEVIAEHPVLLNRAPTLHRLGIQAFEPQLVEGKAIQLHPLVCEAFNADFDGDQMAVHLPLSAEAQAEARILMLSSNNILSPASGRPLAMPRLDMVTGLYYLTRLEEGAKGEYRPATADAPEFGVYSSPAEAQMAVDRGELTVRSKIKVRLTDQRPPKDVEAELFPEGWQRGDAWTTETTLGRVLFNELLPADYPFINEPMPKKRQATIINDLAERYPMIVVAQTVDKLKDAGFYWATRSGVTVSMSDVLVPPEKAEIMERYEAQSDQIEKKYQRGALDHQERNNALVKIWQEATEEVGKALRAHYPADNPIITIVDSGATGNFTQTRTLAGMKGLVTNPKGEFIPRPIKSSFREGLTVLEYFINTHGARKGLADTALRTADSGYLTRRLVDVSQDVIVREHDCGTERGIVVPIAEKQPDGSIIRDPHVETSTYARTLAADAVDANGNVIVAKGADLGDPALEALLEAGITEVKVRSVLTCTTGTGVCATCYGRSMATGKLVDIGEAVGIVAAQSIGEPGTQLTMRTFHQGGVAGDDITGGLPRVQELFEARVPKGKAPIAEVSGRVRLEDDDRFYKITIIPDDGGEEVVYDKLSKRQRLRVFKHDDGTERLLSDGDHVEVGQQLLEGAADPHEVLRVMGPRQVQVHLVHEVQEVYRSQGVSIHDKHIEVIVRQMLRRVTIIDSGSTEFLPGSLTERAEFEAANRRVVAEGGEPASGRPVLMGITKASLATDSWLSAASFQETTRVLTDAAINCRSDKLIGLKENVIIGKLIPAGTGINRYRNIQVQPTEEARAAAYAVPSYDDTYYSPDSFGSSTGAAVPLDDYGFSDYR</sequence>
<organism>
    <name type="scientific">Nocardia farcinica (strain IFM 10152)</name>
    <dbReference type="NCBI Taxonomy" id="247156"/>
    <lineage>
        <taxon>Bacteria</taxon>
        <taxon>Bacillati</taxon>
        <taxon>Actinomycetota</taxon>
        <taxon>Actinomycetes</taxon>
        <taxon>Mycobacteriales</taxon>
        <taxon>Nocardiaceae</taxon>
        <taxon>Nocardia</taxon>
    </lineage>
</organism>
<accession>Q5YPE1</accession>
<dbReference type="EC" id="2.7.7.6" evidence="1"/>
<dbReference type="EMBL" id="AP006618">
    <property type="protein sequence ID" value="BAD59950.1"/>
    <property type="molecule type" value="Genomic_DNA"/>
</dbReference>
<dbReference type="RefSeq" id="WP_011211632.1">
    <property type="nucleotide sequence ID" value="NC_006361.1"/>
</dbReference>
<dbReference type="SMR" id="Q5YPE1"/>
<dbReference type="STRING" id="247156.NFA_50980"/>
<dbReference type="GeneID" id="61135672"/>
<dbReference type="KEGG" id="nfa:NFA_50980"/>
<dbReference type="eggNOG" id="COG0086">
    <property type="taxonomic scope" value="Bacteria"/>
</dbReference>
<dbReference type="HOGENOM" id="CLU_000524_3_1_11"/>
<dbReference type="OrthoDB" id="9815296at2"/>
<dbReference type="Proteomes" id="UP000006820">
    <property type="component" value="Chromosome"/>
</dbReference>
<dbReference type="GO" id="GO:0000428">
    <property type="term" value="C:DNA-directed RNA polymerase complex"/>
    <property type="evidence" value="ECO:0007669"/>
    <property type="project" value="UniProtKB-KW"/>
</dbReference>
<dbReference type="GO" id="GO:0003677">
    <property type="term" value="F:DNA binding"/>
    <property type="evidence" value="ECO:0007669"/>
    <property type="project" value="UniProtKB-UniRule"/>
</dbReference>
<dbReference type="GO" id="GO:0003899">
    <property type="term" value="F:DNA-directed RNA polymerase activity"/>
    <property type="evidence" value="ECO:0007669"/>
    <property type="project" value="UniProtKB-UniRule"/>
</dbReference>
<dbReference type="GO" id="GO:0000287">
    <property type="term" value="F:magnesium ion binding"/>
    <property type="evidence" value="ECO:0007669"/>
    <property type="project" value="UniProtKB-UniRule"/>
</dbReference>
<dbReference type="GO" id="GO:0008270">
    <property type="term" value="F:zinc ion binding"/>
    <property type="evidence" value="ECO:0007669"/>
    <property type="project" value="UniProtKB-UniRule"/>
</dbReference>
<dbReference type="GO" id="GO:0006351">
    <property type="term" value="P:DNA-templated transcription"/>
    <property type="evidence" value="ECO:0007669"/>
    <property type="project" value="UniProtKB-UniRule"/>
</dbReference>
<dbReference type="CDD" id="cd02655">
    <property type="entry name" value="RNAP_beta'_C"/>
    <property type="match status" value="1"/>
</dbReference>
<dbReference type="CDD" id="cd01609">
    <property type="entry name" value="RNAP_beta'_N"/>
    <property type="match status" value="1"/>
</dbReference>
<dbReference type="FunFam" id="1.10.150.390:FF:000002">
    <property type="entry name" value="DNA-directed RNA polymerase subunit beta"/>
    <property type="match status" value="1"/>
</dbReference>
<dbReference type="FunFam" id="1.10.40.90:FF:000001">
    <property type="entry name" value="DNA-directed RNA polymerase subunit beta"/>
    <property type="match status" value="1"/>
</dbReference>
<dbReference type="FunFam" id="4.10.860.120:FF:000001">
    <property type="entry name" value="DNA-directed RNA polymerase subunit beta"/>
    <property type="match status" value="1"/>
</dbReference>
<dbReference type="Gene3D" id="1.10.132.30">
    <property type="match status" value="1"/>
</dbReference>
<dbReference type="Gene3D" id="1.10.150.390">
    <property type="match status" value="1"/>
</dbReference>
<dbReference type="Gene3D" id="1.10.1790.20">
    <property type="match status" value="1"/>
</dbReference>
<dbReference type="Gene3D" id="1.10.40.90">
    <property type="match status" value="1"/>
</dbReference>
<dbReference type="Gene3D" id="2.40.40.20">
    <property type="match status" value="1"/>
</dbReference>
<dbReference type="Gene3D" id="2.40.50.100">
    <property type="match status" value="1"/>
</dbReference>
<dbReference type="Gene3D" id="4.10.860.120">
    <property type="entry name" value="RNA polymerase II, clamp domain"/>
    <property type="match status" value="1"/>
</dbReference>
<dbReference type="Gene3D" id="1.10.274.100">
    <property type="entry name" value="RNA polymerase Rpb1, domain 3"/>
    <property type="match status" value="1"/>
</dbReference>
<dbReference type="HAMAP" id="MF_01322">
    <property type="entry name" value="RNApol_bact_RpoC"/>
    <property type="match status" value="1"/>
</dbReference>
<dbReference type="InterPro" id="IPR045867">
    <property type="entry name" value="DNA-dir_RpoC_beta_prime"/>
</dbReference>
<dbReference type="InterPro" id="IPR012754">
    <property type="entry name" value="DNA-dir_RpoC_beta_prime_bact"/>
</dbReference>
<dbReference type="InterPro" id="IPR000722">
    <property type="entry name" value="RNA_pol_asu"/>
</dbReference>
<dbReference type="InterPro" id="IPR006592">
    <property type="entry name" value="RNA_pol_N"/>
</dbReference>
<dbReference type="InterPro" id="IPR007080">
    <property type="entry name" value="RNA_pol_Rpb1_1"/>
</dbReference>
<dbReference type="InterPro" id="IPR007066">
    <property type="entry name" value="RNA_pol_Rpb1_3"/>
</dbReference>
<dbReference type="InterPro" id="IPR042102">
    <property type="entry name" value="RNA_pol_Rpb1_3_sf"/>
</dbReference>
<dbReference type="InterPro" id="IPR007083">
    <property type="entry name" value="RNA_pol_Rpb1_4"/>
</dbReference>
<dbReference type="InterPro" id="IPR007081">
    <property type="entry name" value="RNA_pol_Rpb1_5"/>
</dbReference>
<dbReference type="InterPro" id="IPR044893">
    <property type="entry name" value="RNA_pol_Rpb1_clamp_domain"/>
</dbReference>
<dbReference type="InterPro" id="IPR038120">
    <property type="entry name" value="Rpb1_funnel_sf"/>
</dbReference>
<dbReference type="NCBIfam" id="NF011498">
    <property type="entry name" value="PRK14906.1"/>
    <property type="match status" value="1"/>
</dbReference>
<dbReference type="NCBIfam" id="TIGR02386">
    <property type="entry name" value="rpoC_TIGR"/>
    <property type="match status" value="1"/>
</dbReference>
<dbReference type="PANTHER" id="PTHR19376">
    <property type="entry name" value="DNA-DIRECTED RNA POLYMERASE"/>
    <property type="match status" value="1"/>
</dbReference>
<dbReference type="PANTHER" id="PTHR19376:SF54">
    <property type="entry name" value="DNA-DIRECTED RNA POLYMERASE SUBUNIT BETA"/>
    <property type="match status" value="1"/>
</dbReference>
<dbReference type="Pfam" id="PF04997">
    <property type="entry name" value="RNA_pol_Rpb1_1"/>
    <property type="match status" value="1"/>
</dbReference>
<dbReference type="Pfam" id="PF00623">
    <property type="entry name" value="RNA_pol_Rpb1_2"/>
    <property type="match status" value="1"/>
</dbReference>
<dbReference type="Pfam" id="PF04983">
    <property type="entry name" value="RNA_pol_Rpb1_3"/>
    <property type="match status" value="1"/>
</dbReference>
<dbReference type="Pfam" id="PF05000">
    <property type="entry name" value="RNA_pol_Rpb1_4"/>
    <property type="match status" value="1"/>
</dbReference>
<dbReference type="Pfam" id="PF04998">
    <property type="entry name" value="RNA_pol_Rpb1_5"/>
    <property type="match status" value="1"/>
</dbReference>
<dbReference type="SMART" id="SM00663">
    <property type="entry name" value="RPOLA_N"/>
    <property type="match status" value="1"/>
</dbReference>
<dbReference type="SUPFAM" id="SSF64484">
    <property type="entry name" value="beta and beta-prime subunits of DNA dependent RNA-polymerase"/>
    <property type="match status" value="1"/>
</dbReference>
<evidence type="ECO:0000255" key="1">
    <source>
        <dbReference type="HAMAP-Rule" id="MF_01322"/>
    </source>
</evidence>
<reference key="1">
    <citation type="journal article" date="2004" name="Proc. Natl. Acad. Sci. U.S.A.">
        <title>The complete genomic sequence of Nocardia farcinica IFM 10152.</title>
        <authorList>
            <person name="Ishikawa J."/>
            <person name="Yamashita A."/>
            <person name="Mikami Y."/>
            <person name="Hoshino Y."/>
            <person name="Kurita H."/>
            <person name="Hotta K."/>
            <person name="Shiba T."/>
            <person name="Hattori M."/>
        </authorList>
    </citation>
    <scope>NUCLEOTIDE SEQUENCE [LARGE SCALE GENOMIC DNA]</scope>
    <source>
        <strain>IFM 10152</strain>
    </source>
</reference>
<feature type="chain" id="PRO_0000225558" description="DNA-directed RNA polymerase subunit beta'">
    <location>
        <begin position="1"/>
        <end position="1317"/>
    </location>
</feature>
<feature type="binding site" evidence="1">
    <location>
        <position position="60"/>
    </location>
    <ligand>
        <name>Zn(2+)</name>
        <dbReference type="ChEBI" id="CHEBI:29105"/>
        <label>1</label>
    </ligand>
</feature>
<feature type="binding site" evidence="1">
    <location>
        <position position="62"/>
    </location>
    <ligand>
        <name>Zn(2+)</name>
        <dbReference type="ChEBI" id="CHEBI:29105"/>
        <label>1</label>
    </ligand>
</feature>
<feature type="binding site" evidence="1">
    <location>
        <position position="75"/>
    </location>
    <ligand>
        <name>Zn(2+)</name>
        <dbReference type="ChEBI" id="CHEBI:29105"/>
        <label>1</label>
    </ligand>
</feature>
<feature type="binding site" evidence="1">
    <location>
        <position position="78"/>
    </location>
    <ligand>
        <name>Zn(2+)</name>
        <dbReference type="ChEBI" id="CHEBI:29105"/>
        <label>1</label>
    </ligand>
</feature>
<feature type="binding site" evidence="1">
    <location>
        <position position="535"/>
    </location>
    <ligand>
        <name>Mg(2+)</name>
        <dbReference type="ChEBI" id="CHEBI:18420"/>
    </ligand>
</feature>
<feature type="binding site" evidence="1">
    <location>
        <position position="537"/>
    </location>
    <ligand>
        <name>Mg(2+)</name>
        <dbReference type="ChEBI" id="CHEBI:18420"/>
    </ligand>
</feature>
<feature type="binding site" evidence="1">
    <location>
        <position position="539"/>
    </location>
    <ligand>
        <name>Mg(2+)</name>
        <dbReference type="ChEBI" id="CHEBI:18420"/>
    </ligand>
</feature>
<feature type="binding site" evidence="1">
    <location>
        <position position="890"/>
    </location>
    <ligand>
        <name>Zn(2+)</name>
        <dbReference type="ChEBI" id="CHEBI:29105"/>
        <label>2</label>
    </ligand>
</feature>
<feature type="binding site" evidence="1">
    <location>
        <position position="967"/>
    </location>
    <ligand>
        <name>Zn(2+)</name>
        <dbReference type="ChEBI" id="CHEBI:29105"/>
        <label>2</label>
    </ligand>
</feature>
<feature type="binding site" evidence="1">
    <location>
        <position position="974"/>
    </location>
    <ligand>
        <name>Zn(2+)</name>
        <dbReference type="ChEBI" id="CHEBI:29105"/>
        <label>2</label>
    </ligand>
</feature>
<feature type="binding site" evidence="1">
    <location>
        <position position="977"/>
    </location>
    <ligand>
        <name>Zn(2+)</name>
        <dbReference type="ChEBI" id="CHEBI:29105"/>
        <label>2</label>
    </ligand>
</feature>
<proteinExistence type="inferred from homology"/>
<gene>
    <name evidence="1" type="primary">rpoC</name>
    <name type="ordered locus">NFA_50980</name>
</gene>